<dbReference type="EC" id="3.5.1.108" evidence="1"/>
<dbReference type="EMBL" id="CP000124">
    <property type="protein sequence ID" value="ABA48603.1"/>
    <property type="status" value="ALT_INIT"/>
    <property type="molecule type" value="Genomic_DNA"/>
</dbReference>
<dbReference type="RefSeq" id="WP_004194158.1">
    <property type="nucleotide sequence ID" value="NC_007434.1"/>
</dbReference>
<dbReference type="SMR" id="Q3JNE6"/>
<dbReference type="EnsemblBacteria" id="ABA48603">
    <property type="protein sequence ID" value="ABA48603"/>
    <property type="gene ID" value="BURPS1710b_3537"/>
</dbReference>
<dbReference type="GeneID" id="93061620"/>
<dbReference type="KEGG" id="bpm:BURPS1710b_3537"/>
<dbReference type="HOGENOM" id="CLU_046528_1_0_4"/>
<dbReference type="UniPathway" id="UPA00359">
    <property type="reaction ID" value="UER00478"/>
</dbReference>
<dbReference type="Proteomes" id="UP000002700">
    <property type="component" value="Chromosome I"/>
</dbReference>
<dbReference type="GO" id="GO:0016020">
    <property type="term" value="C:membrane"/>
    <property type="evidence" value="ECO:0007669"/>
    <property type="project" value="GOC"/>
</dbReference>
<dbReference type="GO" id="GO:0046872">
    <property type="term" value="F:metal ion binding"/>
    <property type="evidence" value="ECO:0007669"/>
    <property type="project" value="UniProtKB-KW"/>
</dbReference>
<dbReference type="GO" id="GO:0103117">
    <property type="term" value="F:UDP-3-O-acyl-N-acetylglucosamine deacetylase activity"/>
    <property type="evidence" value="ECO:0007669"/>
    <property type="project" value="UniProtKB-UniRule"/>
</dbReference>
<dbReference type="GO" id="GO:0009245">
    <property type="term" value="P:lipid A biosynthetic process"/>
    <property type="evidence" value="ECO:0007669"/>
    <property type="project" value="UniProtKB-UniRule"/>
</dbReference>
<dbReference type="Gene3D" id="3.30.230.20">
    <property type="entry name" value="lpxc deacetylase, domain 1"/>
    <property type="match status" value="1"/>
</dbReference>
<dbReference type="Gene3D" id="3.30.1700.10">
    <property type="entry name" value="lpxc deacetylase, domain 2"/>
    <property type="match status" value="1"/>
</dbReference>
<dbReference type="HAMAP" id="MF_00388">
    <property type="entry name" value="LpxC"/>
    <property type="match status" value="1"/>
</dbReference>
<dbReference type="InterPro" id="IPR020568">
    <property type="entry name" value="Ribosomal_Su5_D2-typ_SF"/>
</dbReference>
<dbReference type="InterPro" id="IPR004463">
    <property type="entry name" value="UDP-acyl_GlcNac_deAcase"/>
</dbReference>
<dbReference type="InterPro" id="IPR011334">
    <property type="entry name" value="UDP-acyl_GlcNac_deAcase_C"/>
</dbReference>
<dbReference type="InterPro" id="IPR015870">
    <property type="entry name" value="UDP-acyl_N-AcGlcN_deAcase_N"/>
</dbReference>
<dbReference type="NCBIfam" id="TIGR00325">
    <property type="entry name" value="lpxC"/>
    <property type="match status" value="1"/>
</dbReference>
<dbReference type="PANTHER" id="PTHR33694">
    <property type="entry name" value="UDP-3-O-ACYL-N-ACETYLGLUCOSAMINE DEACETYLASE 1, MITOCHONDRIAL-RELATED"/>
    <property type="match status" value="1"/>
</dbReference>
<dbReference type="PANTHER" id="PTHR33694:SF1">
    <property type="entry name" value="UDP-3-O-ACYL-N-ACETYLGLUCOSAMINE DEACETYLASE 1, MITOCHONDRIAL-RELATED"/>
    <property type="match status" value="1"/>
</dbReference>
<dbReference type="Pfam" id="PF03331">
    <property type="entry name" value="LpxC"/>
    <property type="match status" value="1"/>
</dbReference>
<dbReference type="SUPFAM" id="SSF54211">
    <property type="entry name" value="Ribosomal protein S5 domain 2-like"/>
    <property type="match status" value="2"/>
</dbReference>
<proteinExistence type="inferred from homology"/>
<comment type="function">
    <text evidence="1">Catalyzes the hydrolysis of UDP-3-O-myristoyl-N-acetylglucosamine to form UDP-3-O-myristoylglucosamine and acetate, the committed step in lipid A biosynthesis.</text>
</comment>
<comment type="catalytic activity">
    <reaction evidence="1">
        <text>a UDP-3-O-[(3R)-3-hydroxyacyl]-N-acetyl-alpha-D-glucosamine + H2O = a UDP-3-O-[(3R)-3-hydroxyacyl]-alpha-D-glucosamine + acetate</text>
        <dbReference type="Rhea" id="RHEA:67816"/>
        <dbReference type="ChEBI" id="CHEBI:15377"/>
        <dbReference type="ChEBI" id="CHEBI:30089"/>
        <dbReference type="ChEBI" id="CHEBI:137740"/>
        <dbReference type="ChEBI" id="CHEBI:173225"/>
        <dbReference type="EC" id="3.5.1.108"/>
    </reaction>
</comment>
<comment type="cofactor">
    <cofactor evidence="1">
        <name>Zn(2+)</name>
        <dbReference type="ChEBI" id="CHEBI:29105"/>
    </cofactor>
</comment>
<comment type="pathway">
    <text evidence="1">Glycolipid biosynthesis; lipid IV(A) biosynthesis; lipid IV(A) from (3R)-3-hydroxytetradecanoyl-[acyl-carrier-protein] and UDP-N-acetyl-alpha-D-glucosamine: step 2/6.</text>
</comment>
<comment type="similarity">
    <text evidence="1">Belongs to the LpxC family.</text>
</comment>
<comment type="sequence caution" evidence="2">
    <conflict type="erroneous initiation">
        <sequence resource="EMBL-CDS" id="ABA48603"/>
    </conflict>
</comment>
<reference key="1">
    <citation type="journal article" date="2010" name="Genome Biol. Evol.">
        <title>Continuing evolution of Burkholderia mallei through genome reduction and large-scale rearrangements.</title>
        <authorList>
            <person name="Losada L."/>
            <person name="Ronning C.M."/>
            <person name="DeShazer D."/>
            <person name="Woods D."/>
            <person name="Fedorova N."/>
            <person name="Kim H.S."/>
            <person name="Shabalina S.A."/>
            <person name="Pearson T.R."/>
            <person name="Brinkac L."/>
            <person name="Tan P."/>
            <person name="Nandi T."/>
            <person name="Crabtree J."/>
            <person name="Badger J."/>
            <person name="Beckstrom-Sternberg S."/>
            <person name="Saqib M."/>
            <person name="Schutzer S.E."/>
            <person name="Keim P."/>
            <person name="Nierman W.C."/>
        </authorList>
    </citation>
    <scope>NUCLEOTIDE SEQUENCE [LARGE SCALE GENOMIC DNA]</scope>
    <source>
        <strain>1710b</strain>
    </source>
</reference>
<organism>
    <name type="scientific">Burkholderia pseudomallei (strain 1710b)</name>
    <dbReference type="NCBI Taxonomy" id="320372"/>
    <lineage>
        <taxon>Bacteria</taxon>
        <taxon>Pseudomonadati</taxon>
        <taxon>Pseudomonadota</taxon>
        <taxon>Betaproteobacteria</taxon>
        <taxon>Burkholderiales</taxon>
        <taxon>Burkholderiaceae</taxon>
        <taxon>Burkholderia</taxon>
        <taxon>pseudomallei group</taxon>
    </lineage>
</organism>
<keyword id="KW-0378">Hydrolase</keyword>
<keyword id="KW-0441">Lipid A biosynthesis</keyword>
<keyword id="KW-0444">Lipid biosynthesis</keyword>
<keyword id="KW-0443">Lipid metabolism</keyword>
<keyword id="KW-0479">Metal-binding</keyword>
<keyword id="KW-0862">Zinc</keyword>
<feature type="chain" id="PRO_0000253653" description="UDP-3-O-acyl-N-acetylglucosamine deacetylase">
    <location>
        <begin position="1"/>
        <end position="305"/>
    </location>
</feature>
<feature type="active site" description="Proton donor" evidence="1">
    <location>
        <position position="264"/>
    </location>
</feature>
<feature type="binding site" evidence="1">
    <location>
        <position position="78"/>
    </location>
    <ligand>
        <name>Zn(2+)</name>
        <dbReference type="ChEBI" id="CHEBI:29105"/>
    </ligand>
</feature>
<feature type="binding site" evidence="1">
    <location>
        <position position="237"/>
    </location>
    <ligand>
        <name>Zn(2+)</name>
        <dbReference type="ChEBI" id="CHEBI:29105"/>
    </ligand>
</feature>
<feature type="binding site" evidence="1">
    <location>
        <position position="241"/>
    </location>
    <ligand>
        <name>Zn(2+)</name>
        <dbReference type="ChEBI" id="CHEBI:29105"/>
    </ligand>
</feature>
<name>LPXC_BURP1</name>
<evidence type="ECO:0000255" key="1">
    <source>
        <dbReference type="HAMAP-Rule" id="MF_00388"/>
    </source>
</evidence>
<evidence type="ECO:0000305" key="2"/>
<sequence length="305" mass="33526">MLKQRTIKSIVKTVGIGVHSGRKVELTLRPAAPDTGIVFSRVDLPTPVDIPASALSIGDTRLASVLQKDGVRVSTVEHLMSACAGLGIDNLYVDVTAEEIPIMDGSAATFVFLIQSAGIEEQNAAKKFIKVTKPVEIRDGDKFARLDPYFGFKLKFTIDFRHPAVDKTGQELEVDFANTSYVREIARARTFGFAHEVEMMRELGLARGGSMDNAIVLDEYRILNNDGLRYDDEFVKHKMLDAIGDLYVIGHPLLASYTAYKSGHGLNNALLRELLAHEQAYEIVTFDDPKTAPTGFGFDAQTAFA</sequence>
<accession>Q3JNE6</accession>
<protein>
    <recommendedName>
        <fullName evidence="1">UDP-3-O-acyl-N-acetylglucosamine deacetylase</fullName>
        <shortName evidence="1">UDP-3-O-acyl-GlcNAc deacetylase</shortName>
        <ecNumber evidence="1">3.5.1.108</ecNumber>
    </recommendedName>
    <alternativeName>
        <fullName evidence="1">UDP-3-O-[R-3-hydroxymyristoyl]-N-acetylglucosamine deacetylase</fullName>
    </alternativeName>
</protein>
<gene>
    <name evidence="1" type="primary">lpxC</name>
    <name type="ordered locus">BURPS1710b_3537</name>
</gene>